<comment type="function">
    <text evidence="1">Catalyzes two activities which are involved in the cyclic version of arginine biosynthesis: the synthesis of N-acetylglutamate from glutamate and acetyl-CoA as the acetyl donor, and of ornithine by transacetylation between N(2)-acetylornithine and glutamate.</text>
</comment>
<comment type="catalytic activity">
    <reaction evidence="1">
        <text>N(2)-acetyl-L-ornithine + L-glutamate = N-acetyl-L-glutamate + L-ornithine</text>
        <dbReference type="Rhea" id="RHEA:15349"/>
        <dbReference type="ChEBI" id="CHEBI:29985"/>
        <dbReference type="ChEBI" id="CHEBI:44337"/>
        <dbReference type="ChEBI" id="CHEBI:46911"/>
        <dbReference type="ChEBI" id="CHEBI:57805"/>
        <dbReference type="EC" id="2.3.1.35"/>
    </reaction>
</comment>
<comment type="catalytic activity">
    <reaction evidence="1">
        <text>L-glutamate + acetyl-CoA = N-acetyl-L-glutamate + CoA + H(+)</text>
        <dbReference type="Rhea" id="RHEA:24292"/>
        <dbReference type="ChEBI" id="CHEBI:15378"/>
        <dbReference type="ChEBI" id="CHEBI:29985"/>
        <dbReference type="ChEBI" id="CHEBI:44337"/>
        <dbReference type="ChEBI" id="CHEBI:57287"/>
        <dbReference type="ChEBI" id="CHEBI:57288"/>
        <dbReference type="EC" id="2.3.1.1"/>
    </reaction>
</comment>
<comment type="pathway">
    <text evidence="1">Amino-acid biosynthesis; L-arginine biosynthesis; L-ornithine and N-acetyl-L-glutamate from L-glutamate and N(2)-acetyl-L-ornithine (cyclic): step 1/1.</text>
</comment>
<comment type="pathway">
    <text evidence="1">Amino-acid biosynthesis; L-arginine biosynthesis; N(2)-acetyl-L-ornithine from L-glutamate: step 1/4.</text>
</comment>
<comment type="subunit">
    <text evidence="1">Heterotetramer of two alpha and two beta chains.</text>
</comment>
<comment type="subcellular location">
    <subcellularLocation>
        <location evidence="1">Cytoplasm</location>
    </subcellularLocation>
</comment>
<comment type="similarity">
    <text evidence="1">Belongs to the ArgJ family.</text>
</comment>
<feature type="chain" id="PRO_0000002165" description="Arginine biosynthesis bifunctional protein ArgJ alpha chain" evidence="1">
    <location>
        <begin position="1"/>
        <end position="178"/>
    </location>
</feature>
<feature type="chain" id="PRO_0000002166" description="Arginine biosynthesis bifunctional protein ArgJ beta chain" evidence="1">
    <location>
        <begin position="179"/>
        <end position="393"/>
    </location>
</feature>
<feature type="active site" description="Nucleophile" evidence="1">
    <location>
        <position position="179"/>
    </location>
</feature>
<feature type="binding site" evidence="1">
    <location>
        <position position="142"/>
    </location>
    <ligand>
        <name>substrate</name>
    </ligand>
</feature>
<feature type="binding site" evidence="1">
    <location>
        <position position="168"/>
    </location>
    <ligand>
        <name>substrate</name>
    </ligand>
</feature>
<feature type="binding site" evidence="1">
    <location>
        <position position="179"/>
    </location>
    <ligand>
        <name>substrate</name>
    </ligand>
</feature>
<feature type="binding site" evidence="1">
    <location>
        <position position="265"/>
    </location>
    <ligand>
        <name>substrate</name>
    </ligand>
</feature>
<feature type="binding site" evidence="1">
    <location>
        <position position="388"/>
    </location>
    <ligand>
        <name>substrate</name>
    </ligand>
</feature>
<feature type="binding site" evidence="1">
    <location>
        <position position="393"/>
    </location>
    <ligand>
        <name>substrate</name>
    </ligand>
</feature>
<feature type="site" description="Involved in the stabilization of negative charge on the oxyanion by the formation of the oxyanion hole" evidence="1">
    <location>
        <position position="105"/>
    </location>
</feature>
<feature type="site" description="Involved in the stabilization of negative charge on the oxyanion by the formation of the oxyanion hole" evidence="1">
    <location>
        <position position="106"/>
    </location>
</feature>
<feature type="site" description="Cleavage; by autolysis" evidence="1">
    <location>
        <begin position="178"/>
        <end position="179"/>
    </location>
</feature>
<dbReference type="EC" id="2.3.1.35" evidence="1"/>
<dbReference type="EC" id="2.3.1.1" evidence="1"/>
<dbReference type="EMBL" id="CR522870">
    <property type="protein sequence ID" value="CAG37470.1"/>
    <property type="molecule type" value="Genomic_DNA"/>
</dbReference>
<dbReference type="RefSeq" id="WP_011189982.1">
    <property type="nucleotide sequence ID" value="NC_006138.1"/>
</dbReference>
<dbReference type="SMR" id="Q6AJL0"/>
<dbReference type="STRING" id="177439.DP2741"/>
<dbReference type="MEROPS" id="T05.002"/>
<dbReference type="KEGG" id="dps:DP2741"/>
<dbReference type="eggNOG" id="COG1364">
    <property type="taxonomic scope" value="Bacteria"/>
</dbReference>
<dbReference type="HOGENOM" id="CLU_027172_1_0_7"/>
<dbReference type="OrthoDB" id="9804242at2"/>
<dbReference type="UniPathway" id="UPA00068">
    <property type="reaction ID" value="UER00106"/>
</dbReference>
<dbReference type="UniPathway" id="UPA00068">
    <property type="reaction ID" value="UER00111"/>
</dbReference>
<dbReference type="Proteomes" id="UP000000602">
    <property type="component" value="Chromosome"/>
</dbReference>
<dbReference type="GO" id="GO:0005737">
    <property type="term" value="C:cytoplasm"/>
    <property type="evidence" value="ECO:0007669"/>
    <property type="project" value="UniProtKB-SubCell"/>
</dbReference>
<dbReference type="GO" id="GO:0004358">
    <property type="term" value="F:glutamate N-acetyltransferase activity"/>
    <property type="evidence" value="ECO:0007669"/>
    <property type="project" value="UniProtKB-UniRule"/>
</dbReference>
<dbReference type="GO" id="GO:0004042">
    <property type="term" value="F:L-glutamate N-acetyltransferase activity"/>
    <property type="evidence" value="ECO:0007669"/>
    <property type="project" value="UniProtKB-UniRule"/>
</dbReference>
<dbReference type="GO" id="GO:0006526">
    <property type="term" value="P:L-arginine biosynthetic process"/>
    <property type="evidence" value="ECO:0007669"/>
    <property type="project" value="UniProtKB-UniRule"/>
</dbReference>
<dbReference type="GO" id="GO:0006592">
    <property type="term" value="P:ornithine biosynthetic process"/>
    <property type="evidence" value="ECO:0007669"/>
    <property type="project" value="TreeGrafter"/>
</dbReference>
<dbReference type="CDD" id="cd02152">
    <property type="entry name" value="OAT"/>
    <property type="match status" value="1"/>
</dbReference>
<dbReference type="FunFam" id="3.10.20.340:FF:000001">
    <property type="entry name" value="Arginine biosynthesis bifunctional protein ArgJ, chloroplastic"/>
    <property type="match status" value="1"/>
</dbReference>
<dbReference type="FunFam" id="3.60.70.12:FF:000001">
    <property type="entry name" value="Arginine biosynthesis bifunctional protein ArgJ, chloroplastic"/>
    <property type="match status" value="1"/>
</dbReference>
<dbReference type="Gene3D" id="3.10.20.340">
    <property type="entry name" value="ArgJ beta chain, C-terminal domain"/>
    <property type="match status" value="1"/>
</dbReference>
<dbReference type="Gene3D" id="3.60.70.12">
    <property type="entry name" value="L-amino peptidase D-ALA esterase/amidase"/>
    <property type="match status" value="1"/>
</dbReference>
<dbReference type="HAMAP" id="MF_01106">
    <property type="entry name" value="ArgJ"/>
    <property type="match status" value="1"/>
</dbReference>
<dbReference type="InterPro" id="IPR002813">
    <property type="entry name" value="Arg_biosynth_ArgJ"/>
</dbReference>
<dbReference type="InterPro" id="IPR016117">
    <property type="entry name" value="ArgJ-like_dom_sf"/>
</dbReference>
<dbReference type="InterPro" id="IPR042195">
    <property type="entry name" value="ArgJ_beta_C"/>
</dbReference>
<dbReference type="NCBIfam" id="TIGR00120">
    <property type="entry name" value="ArgJ"/>
    <property type="match status" value="1"/>
</dbReference>
<dbReference type="NCBIfam" id="NF003802">
    <property type="entry name" value="PRK05388.1"/>
    <property type="match status" value="1"/>
</dbReference>
<dbReference type="PANTHER" id="PTHR23100">
    <property type="entry name" value="ARGININE BIOSYNTHESIS BIFUNCTIONAL PROTEIN ARGJ"/>
    <property type="match status" value="1"/>
</dbReference>
<dbReference type="PANTHER" id="PTHR23100:SF0">
    <property type="entry name" value="ARGININE BIOSYNTHESIS BIFUNCTIONAL PROTEIN ARGJ, MITOCHONDRIAL"/>
    <property type="match status" value="1"/>
</dbReference>
<dbReference type="Pfam" id="PF01960">
    <property type="entry name" value="ArgJ"/>
    <property type="match status" value="1"/>
</dbReference>
<dbReference type="SUPFAM" id="SSF56266">
    <property type="entry name" value="DmpA/ArgJ-like"/>
    <property type="match status" value="1"/>
</dbReference>
<sequence>MEIKGFSFSAVEAGIRYQDRLDLGLIYSDHPVVAAGALTTSLVKAAPVLIDIDRLEDGCAQAILVNSGCANACTGEAGMEVAFVTGELLAKELEIKPENILLSSTGVIGEPLNVRAFRDNISPLVQGLAPDNFEKVAQAIMTTDTVQKVCYHSVEIDGVDVHFMGMAKGAGMIMPNMATMLSFVITDAQIGSAQLKEALTPAVKKTFNRITVDGDTSTNDMVLVMANGGAQNSSIKSGTQAAEDFQGALQYVLMDLALKIVADGEGASKMITIRVCGAREDAEAEQVARTVANSSLVKTAFFGEDANWGRILAAMGRAGVPFDPYQVDISFGDVTLVRDGLAVGRSAEDTATAILKEKEITVCIDLKSGKCCEEVYTCDFSIDYVKINADYRS</sequence>
<keyword id="KW-0012">Acyltransferase</keyword>
<keyword id="KW-0028">Amino-acid biosynthesis</keyword>
<keyword id="KW-0055">Arginine biosynthesis</keyword>
<keyword id="KW-0068">Autocatalytic cleavage</keyword>
<keyword id="KW-0963">Cytoplasm</keyword>
<keyword id="KW-0511">Multifunctional enzyme</keyword>
<keyword id="KW-1185">Reference proteome</keyword>
<keyword id="KW-0808">Transferase</keyword>
<protein>
    <recommendedName>
        <fullName evidence="1">Arginine biosynthesis bifunctional protein ArgJ</fullName>
    </recommendedName>
    <domain>
        <recommendedName>
            <fullName evidence="1">Glutamate N-acetyltransferase</fullName>
            <ecNumber evidence="1">2.3.1.35</ecNumber>
        </recommendedName>
        <alternativeName>
            <fullName evidence="1">Ornithine acetyltransferase</fullName>
            <shortName evidence="1">OATase</shortName>
        </alternativeName>
        <alternativeName>
            <fullName evidence="1">Ornithine transacetylase</fullName>
        </alternativeName>
    </domain>
    <domain>
        <recommendedName>
            <fullName evidence="1">Amino-acid acetyltransferase</fullName>
            <ecNumber evidence="1">2.3.1.1</ecNumber>
        </recommendedName>
        <alternativeName>
            <fullName evidence="1">N-acetylglutamate synthase</fullName>
            <shortName evidence="1">AGSase</shortName>
        </alternativeName>
    </domain>
    <component>
        <recommendedName>
            <fullName evidence="1">Arginine biosynthesis bifunctional protein ArgJ alpha chain</fullName>
        </recommendedName>
    </component>
    <component>
        <recommendedName>
            <fullName evidence="1">Arginine biosynthesis bifunctional protein ArgJ beta chain</fullName>
        </recommendedName>
    </component>
</protein>
<reference key="1">
    <citation type="journal article" date="2004" name="Environ. Microbiol.">
        <title>The genome of Desulfotalea psychrophila, a sulfate-reducing bacterium from permanently cold Arctic sediments.</title>
        <authorList>
            <person name="Rabus R."/>
            <person name="Ruepp A."/>
            <person name="Frickey T."/>
            <person name="Rattei T."/>
            <person name="Fartmann B."/>
            <person name="Stark M."/>
            <person name="Bauer M."/>
            <person name="Zibat A."/>
            <person name="Lombardot T."/>
            <person name="Becker I."/>
            <person name="Amann J."/>
            <person name="Gellner K."/>
            <person name="Teeling H."/>
            <person name="Leuschner W.D."/>
            <person name="Gloeckner F.-O."/>
            <person name="Lupas A.N."/>
            <person name="Amann R."/>
            <person name="Klenk H.-P."/>
        </authorList>
    </citation>
    <scope>NUCLEOTIDE SEQUENCE [LARGE SCALE GENOMIC DNA]</scope>
    <source>
        <strain>DSM 12343 / LSv54</strain>
    </source>
</reference>
<accession>Q6AJL0</accession>
<proteinExistence type="inferred from homology"/>
<name>ARGJ_DESPS</name>
<gene>
    <name evidence="1" type="primary">argJ</name>
    <name type="ordered locus">DP2741</name>
</gene>
<evidence type="ECO:0000255" key="1">
    <source>
        <dbReference type="HAMAP-Rule" id="MF_01106"/>
    </source>
</evidence>
<organism>
    <name type="scientific">Desulfotalea psychrophila (strain LSv54 / DSM 12343)</name>
    <dbReference type="NCBI Taxonomy" id="177439"/>
    <lineage>
        <taxon>Bacteria</taxon>
        <taxon>Pseudomonadati</taxon>
        <taxon>Thermodesulfobacteriota</taxon>
        <taxon>Desulfobulbia</taxon>
        <taxon>Desulfobulbales</taxon>
        <taxon>Desulfocapsaceae</taxon>
        <taxon>Desulfotalea</taxon>
    </lineage>
</organism>